<gene>
    <name evidence="1" type="primary">smpB</name>
    <name type="ordered locus">Rxyl_1603</name>
</gene>
<comment type="function">
    <text evidence="1">Required for rescue of stalled ribosomes mediated by trans-translation. Binds to transfer-messenger RNA (tmRNA), required for stable association of tmRNA with ribosomes. tmRNA and SmpB together mimic tRNA shape, replacing the anticodon stem-loop with SmpB. tmRNA is encoded by the ssrA gene; the 2 termini fold to resemble tRNA(Ala) and it encodes a 'tag peptide', a short internal open reading frame. During trans-translation Ala-aminoacylated tmRNA acts like a tRNA, entering the A-site of stalled ribosomes, displacing the stalled mRNA. The ribosome then switches to translate the ORF on the tmRNA; the nascent peptide is terminated with the 'tag peptide' encoded by the tmRNA and targeted for degradation. The ribosome is freed to recommence translation, which seems to be the essential function of trans-translation.</text>
</comment>
<comment type="subcellular location">
    <subcellularLocation>
        <location evidence="1">Cytoplasm</location>
    </subcellularLocation>
    <text evidence="1">The tmRNA-SmpB complex associates with stalled 70S ribosomes.</text>
</comment>
<comment type="similarity">
    <text evidence="1">Belongs to the SmpB family.</text>
</comment>
<protein>
    <recommendedName>
        <fullName evidence="1">SsrA-binding protein</fullName>
    </recommendedName>
    <alternativeName>
        <fullName evidence="1">Small protein B</fullName>
    </alternativeName>
</protein>
<sequence>MSDFARNRKALHDFDIEETYEAGIALTGPEVKSVREGRANLRESYVRVRNGEVFLVGAHISPYKNATNVPQEPTRDRKLLLHRKEIDRLAGKSQEERKTIIPLRLYPKNGLVKLEIAVASRKRQYDKRREIAKKTAQREIERAMKERLRR</sequence>
<dbReference type="EMBL" id="CP000386">
    <property type="protein sequence ID" value="ABG04565.1"/>
    <property type="molecule type" value="Genomic_DNA"/>
</dbReference>
<dbReference type="RefSeq" id="WP_011564582.1">
    <property type="nucleotide sequence ID" value="NC_008148.1"/>
</dbReference>
<dbReference type="SMR" id="Q1AVL3"/>
<dbReference type="STRING" id="266117.Rxyl_1603"/>
<dbReference type="KEGG" id="rxy:Rxyl_1603"/>
<dbReference type="eggNOG" id="COG0691">
    <property type="taxonomic scope" value="Bacteria"/>
</dbReference>
<dbReference type="HOGENOM" id="CLU_108953_0_0_11"/>
<dbReference type="OrthoDB" id="9805462at2"/>
<dbReference type="PhylomeDB" id="Q1AVL3"/>
<dbReference type="Proteomes" id="UP000006637">
    <property type="component" value="Chromosome"/>
</dbReference>
<dbReference type="GO" id="GO:0005829">
    <property type="term" value="C:cytosol"/>
    <property type="evidence" value="ECO:0007669"/>
    <property type="project" value="TreeGrafter"/>
</dbReference>
<dbReference type="GO" id="GO:0003723">
    <property type="term" value="F:RNA binding"/>
    <property type="evidence" value="ECO:0007669"/>
    <property type="project" value="UniProtKB-UniRule"/>
</dbReference>
<dbReference type="GO" id="GO:0070929">
    <property type="term" value="P:trans-translation"/>
    <property type="evidence" value="ECO:0007669"/>
    <property type="project" value="UniProtKB-UniRule"/>
</dbReference>
<dbReference type="CDD" id="cd09294">
    <property type="entry name" value="SmpB"/>
    <property type="match status" value="1"/>
</dbReference>
<dbReference type="Gene3D" id="2.40.280.10">
    <property type="match status" value="1"/>
</dbReference>
<dbReference type="HAMAP" id="MF_00023">
    <property type="entry name" value="SmpB"/>
    <property type="match status" value="1"/>
</dbReference>
<dbReference type="InterPro" id="IPR023620">
    <property type="entry name" value="SmpB"/>
</dbReference>
<dbReference type="InterPro" id="IPR000037">
    <property type="entry name" value="SsrA-bd_prot"/>
</dbReference>
<dbReference type="InterPro" id="IPR020081">
    <property type="entry name" value="SsrA-bd_prot_CS"/>
</dbReference>
<dbReference type="NCBIfam" id="NF003843">
    <property type="entry name" value="PRK05422.1"/>
    <property type="match status" value="1"/>
</dbReference>
<dbReference type="NCBIfam" id="TIGR00086">
    <property type="entry name" value="smpB"/>
    <property type="match status" value="1"/>
</dbReference>
<dbReference type="PANTHER" id="PTHR30308:SF2">
    <property type="entry name" value="SSRA-BINDING PROTEIN"/>
    <property type="match status" value="1"/>
</dbReference>
<dbReference type="PANTHER" id="PTHR30308">
    <property type="entry name" value="TMRNA-BINDING COMPONENT OF TRANS-TRANSLATION TAGGING COMPLEX"/>
    <property type="match status" value="1"/>
</dbReference>
<dbReference type="Pfam" id="PF01668">
    <property type="entry name" value="SmpB"/>
    <property type="match status" value="1"/>
</dbReference>
<dbReference type="SUPFAM" id="SSF74982">
    <property type="entry name" value="Small protein B (SmpB)"/>
    <property type="match status" value="1"/>
</dbReference>
<dbReference type="PROSITE" id="PS01317">
    <property type="entry name" value="SSRP"/>
    <property type="match status" value="1"/>
</dbReference>
<reference key="1">
    <citation type="submission" date="2006-06" db="EMBL/GenBank/DDBJ databases">
        <title>Complete sequence of Rubrobacter xylanophilus DSM 9941.</title>
        <authorList>
            <consortium name="US DOE Joint Genome Institute"/>
            <person name="Copeland A."/>
            <person name="Lucas S."/>
            <person name="Lapidus A."/>
            <person name="Barry K."/>
            <person name="Detter J.C."/>
            <person name="Glavina del Rio T."/>
            <person name="Hammon N."/>
            <person name="Israni S."/>
            <person name="Dalin E."/>
            <person name="Tice H."/>
            <person name="Pitluck S."/>
            <person name="Munk A.C."/>
            <person name="Brettin T."/>
            <person name="Bruce D."/>
            <person name="Han C."/>
            <person name="Tapia R."/>
            <person name="Gilna P."/>
            <person name="Schmutz J."/>
            <person name="Larimer F."/>
            <person name="Land M."/>
            <person name="Hauser L."/>
            <person name="Kyrpides N."/>
            <person name="Lykidis A."/>
            <person name="da Costa M.S."/>
            <person name="Rainey F.A."/>
            <person name="Empadinhas N."/>
            <person name="Jolivet E."/>
            <person name="Battista J.R."/>
            <person name="Richardson P."/>
        </authorList>
    </citation>
    <scope>NUCLEOTIDE SEQUENCE [LARGE SCALE GENOMIC DNA]</scope>
    <source>
        <strain>DSM 9941 / JCM 11954 / NBRC 16129 / PRD-1</strain>
    </source>
</reference>
<proteinExistence type="inferred from homology"/>
<feature type="chain" id="PRO_0000331091" description="SsrA-binding protein">
    <location>
        <begin position="1"/>
        <end position="150"/>
    </location>
</feature>
<organism>
    <name type="scientific">Rubrobacter xylanophilus (strain DSM 9941 / JCM 11954 / NBRC 16129 / PRD-1)</name>
    <dbReference type="NCBI Taxonomy" id="266117"/>
    <lineage>
        <taxon>Bacteria</taxon>
        <taxon>Bacillati</taxon>
        <taxon>Actinomycetota</taxon>
        <taxon>Rubrobacteria</taxon>
        <taxon>Rubrobacterales</taxon>
        <taxon>Rubrobacteraceae</taxon>
        <taxon>Rubrobacter</taxon>
    </lineage>
</organism>
<keyword id="KW-0963">Cytoplasm</keyword>
<keyword id="KW-1185">Reference proteome</keyword>
<keyword id="KW-0694">RNA-binding</keyword>
<name>SSRP_RUBXD</name>
<accession>Q1AVL3</accession>
<evidence type="ECO:0000255" key="1">
    <source>
        <dbReference type="HAMAP-Rule" id="MF_00023"/>
    </source>
</evidence>